<evidence type="ECO:0000255" key="1">
    <source>
        <dbReference type="HAMAP-Rule" id="MF_01272"/>
    </source>
</evidence>
<evidence type="ECO:0000256" key="2">
    <source>
        <dbReference type="SAM" id="MobiDB-lite"/>
    </source>
</evidence>
<comment type="function">
    <text evidence="1">Allows bacterial pathogens to use the host heme as an iron source. Catalyzes the oxidative degradation of the heme macrocyclic porphyrin ring to the biliverdin in the presence of a suitable electron donor such as ascorbate or NADPH--cytochrome P450 reductase, with subsequent release of free iron.</text>
</comment>
<comment type="catalytic activity">
    <reaction evidence="1">
        <text>heme b + 3 reduced [NADPH--hemoprotein reductase] + 3 O2 = biliverdin IXalpha + CO + Fe(2+) + 3 oxidized [NADPH--hemoprotein reductase] + 3 H2O + H(+)</text>
        <dbReference type="Rhea" id="RHEA:21764"/>
        <dbReference type="Rhea" id="RHEA-COMP:11964"/>
        <dbReference type="Rhea" id="RHEA-COMP:11965"/>
        <dbReference type="ChEBI" id="CHEBI:15377"/>
        <dbReference type="ChEBI" id="CHEBI:15378"/>
        <dbReference type="ChEBI" id="CHEBI:15379"/>
        <dbReference type="ChEBI" id="CHEBI:17245"/>
        <dbReference type="ChEBI" id="CHEBI:29033"/>
        <dbReference type="ChEBI" id="CHEBI:57618"/>
        <dbReference type="ChEBI" id="CHEBI:57991"/>
        <dbReference type="ChEBI" id="CHEBI:58210"/>
        <dbReference type="ChEBI" id="CHEBI:60344"/>
        <dbReference type="EC" id="1.14.14.18"/>
    </reaction>
</comment>
<comment type="subunit">
    <text evidence="1">Homodimer.</text>
</comment>
<comment type="subcellular location">
    <subcellularLocation>
        <location evidence="1">Cytoplasm</location>
    </subcellularLocation>
</comment>
<comment type="similarity">
    <text evidence="1">Belongs to the antibiotic biosynthesis monooxygenase family. Heme-degrading monooxygenase IsdG subfamily.</text>
</comment>
<reference key="1">
    <citation type="journal article" date="2012" name="BMC Genomics">
        <title>Comparative genomics and transcriptomics of lineages I, II, and III strains of Listeria monocytogenes.</title>
        <authorList>
            <person name="Hain T."/>
            <person name="Ghai R."/>
            <person name="Billion A."/>
            <person name="Kuenne C.T."/>
            <person name="Steinweg C."/>
            <person name="Izar B."/>
            <person name="Mohamed W."/>
            <person name="Mraheil M."/>
            <person name="Domann E."/>
            <person name="Schaffrath S."/>
            <person name="Karst U."/>
            <person name="Goesmann A."/>
            <person name="Oehm S."/>
            <person name="Puhler A."/>
            <person name="Merkl R."/>
            <person name="Vorwerk S."/>
            <person name="Glaser P."/>
            <person name="Garrido P."/>
            <person name="Rusniok C."/>
            <person name="Buchrieser C."/>
            <person name="Goebel W."/>
            <person name="Chakraborty T."/>
        </authorList>
    </citation>
    <scope>NUCLEOTIDE SEQUENCE [LARGE SCALE GENOMIC DNA]</scope>
    <source>
        <strain>CLIP80459</strain>
    </source>
</reference>
<sequence>MIIVTNTIKVEKGAAEHVIRQFTGANGDGHPTKDIAEVEGFLGFELWHSKPEDKDYEEVVVTSKWESEEAQRNWVKSDSFKKAHGRTKDTREQREDRKGIVGNAIARFEVVHVQNPVIVEK</sequence>
<keyword id="KW-0963">Cytoplasm</keyword>
<keyword id="KW-0349">Heme</keyword>
<keyword id="KW-0408">Iron</keyword>
<keyword id="KW-0479">Metal-binding</keyword>
<keyword id="KW-0503">Monooxygenase</keyword>
<keyword id="KW-0560">Oxidoreductase</keyword>
<feature type="chain" id="PRO_1000214180" description="Heme-degrading monooxygenase">
    <location>
        <begin position="1"/>
        <end position="121"/>
    </location>
</feature>
<feature type="domain" description="ABM" evidence="1">
    <location>
        <begin position="2"/>
        <end position="101"/>
    </location>
</feature>
<feature type="region of interest" description="Disordered" evidence="2">
    <location>
        <begin position="76"/>
        <end position="98"/>
    </location>
</feature>
<feature type="compositionally biased region" description="Basic and acidic residues" evidence="2">
    <location>
        <begin position="78"/>
        <end position="98"/>
    </location>
</feature>
<feature type="binding site" evidence="1">
    <location>
        <position position="6"/>
    </location>
    <ligand>
        <name>Fe cation</name>
        <dbReference type="ChEBI" id="CHEBI:24875"/>
    </ligand>
</feature>
<feature type="binding site" description="axial binding residue" evidence="1">
    <location>
        <position position="84"/>
    </location>
    <ligand>
        <name>heme</name>
        <dbReference type="ChEBI" id="CHEBI:30413"/>
    </ligand>
    <ligandPart>
        <name>Fe</name>
        <dbReference type="ChEBI" id="CHEBI:18248"/>
    </ligandPart>
</feature>
<feature type="site" description="Transition state stabilizer" evidence="1">
    <location>
        <position position="74"/>
    </location>
</feature>
<organism>
    <name type="scientific">Listeria monocytogenes serotype 4b (strain CLIP80459)</name>
    <dbReference type="NCBI Taxonomy" id="568819"/>
    <lineage>
        <taxon>Bacteria</taxon>
        <taxon>Bacillati</taxon>
        <taxon>Bacillota</taxon>
        <taxon>Bacilli</taxon>
        <taxon>Bacillales</taxon>
        <taxon>Listeriaceae</taxon>
        <taxon>Listeria</taxon>
    </lineage>
</organism>
<gene>
    <name evidence="1" type="primary">isdG</name>
    <name type="ordered locus">Lm4b_00504</name>
</gene>
<dbReference type="EC" id="1.14.14.18" evidence="1"/>
<dbReference type="EMBL" id="FM242711">
    <property type="protein sequence ID" value="CAS04272.1"/>
    <property type="molecule type" value="Genomic_DNA"/>
</dbReference>
<dbReference type="RefSeq" id="WP_003721271.1">
    <property type="nucleotide sequence ID" value="NC_012488.1"/>
</dbReference>
<dbReference type="SMR" id="C1KZZ5"/>
<dbReference type="GeneID" id="93233935"/>
<dbReference type="KEGG" id="lmc:Lm4b_00504"/>
<dbReference type="HOGENOM" id="CLU_141544_2_0_9"/>
<dbReference type="GO" id="GO:0005737">
    <property type="term" value="C:cytoplasm"/>
    <property type="evidence" value="ECO:0007669"/>
    <property type="project" value="UniProtKB-SubCell"/>
</dbReference>
<dbReference type="GO" id="GO:0020037">
    <property type="term" value="F:heme binding"/>
    <property type="evidence" value="ECO:0007669"/>
    <property type="project" value="UniProtKB-UniRule"/>
</dbReference>
<dbReference type="GO" id="GO:0004392">
    <property type="term" value="F:heme oxygenase (decyclizing) activity"/>
    <property type="evidence" value="ECO:0007669"/>
    <property type="project" value="UniProtKB-UniRule"/>
</dbReference>
<dbReference type="GO" id="GO:0005506">
    <property type="term" value="F:iron ion binding"/>
    <property type="evidence" value="ECO:0007669"/>
    <property type="project" value="UniProtKB-UniRule"/>
</dbReference>
<dbReference type="GO" id="GO:0042167">
    <property type="term" value="P:heme catabolic process"/>
    <property type="evidence" value="ECO:0007669"/>
    <property type="project" value="UniProtKB-UniRule"/>
</dbReference>
<dbReference type="GO" id="GO:0033212">
    <property type="term" value="P:iron import into cell"/>
    <property type="evidence" value="ECO:0007669"/>
    <property type="project" value="InterPro"/>
</dbReference>
<dbReference type="Gene3D" id="3.30.70.100">
    <property type="match status" value="1"/>
</dbReference>
<dbReference type="HAMAP" id="MF_01272">
    <property type="entry name" value="Heme_degrading_monooxygenase"/>
    <property type="match status" value="1"/>
</dbReference>
<dbReference type="InterPro" id="IPR007138">
    <property type="entry name" value="ABM_dom"/>
</dbReference>
<dbReference type="InterPro" id="IPR011008">
    <property type="entry name" value="Dimeric_a/b-barrel"/>
</dbReference>
<dbReference type="InterPro" id="IPR050404">
    <property type="entry name" value="Heme-degrading_MO"/>
</dbReference>
<dbReference type="InterPro" id="IPR023953">
    <property type="entry name" value="IsdG"/>
</dbReference>
<dbReference type="NCBIfam" id="NF009841">
    <property type="entry name" value="PRK13316.1"/>
    <property type="match status" value="1"/>
</dbReference>
<dbReference type="PANTHER" id="PTHR34474:SF4">
    <property type="entry name" value="HEME OXYGENASE (STAPHYLOBILIN-PRODUCING) 1"/>
    <property type="match status" value="1"/>
</dbReference>
<dbReference type="PANTHER" id="PTHR34474">
    <property type="entry name" value="SIGNAL TRANSDUCTION PROTEIN TRAP"/>
    <property type="match status" value="1"/>
</dbReference>
<dbReference type="Pfam" id="PF03992">
    <property type="entry name" value="ABM"/>
    <property type="match status" value="1"/>
</dbReference>
<dbReference type="SUPFAM" id="SSF54909">
    <property type="entry name" value="Dimeric alpha+beta barrel"/>
    <property type="match status" value="1"/>
</dbReference>
<dbReference type="PROSITE" id="PS51725">
    <property type="entry name" value="ABM"/>
    <property type="match status" value="1"/>
</dbReference>
<name>HDOX_LISMC</name>
<proteinExistence type="inferred from homology"/>
<accession>C1KZZ5</accession>
<protein>
    <recommendedName>
        <fullName evidence="1">Heme-degrading monooxygenase</fullName>
        <ecNumber evidence="1">1.14.14.18</ecNumber>
    </recommendedName>
    <alternativeName>
        <fullName evidence="1">Heme oxygenase</fullName>
    </alternativeName>
    <alternativeName>
        <fullName evidence="1">Iron-regulated surface determinant</fullName>
    </alternativeName>
    <alternativeName>
        <fullName evidence="1">Iron-responsive surface determinant</fullName>
    </alternativeName>
</protein>